<gene>
    <name evidence="1" type="primary">serS</name>
    <name type="ordered locus">Syncc9902_1791</name>
</gene>
<proteinExistence type="inferred from homology"/>
<reference key="1">
    <citation type="submission" date="2005-08" db="EMBL/GenBank/DDBJ databases">
        <title>Complete sequence of Synechococcus sp. CC9902.</title>
        <authorList>
            <person name="Copeland A."/>
            <person name="Lucas S."/>
            <person name="Lapidus A."/>
            <person name="Barry K."/>
            <person name="Detter J.C."/>
            <person name="Glavina T."/>
            <person name="Hammon N."/>
            <person name="Israni S."/>
            <person name="Pitluck S."/>
            <person name="Martinez M."/>
            <person name="Schmutz J."/>
            <person name="Larimer F."/>
            <person name="Land M."/>
            <person name="Kyrpides N."/>
            <person name="Ivanova N."/>
            <person name="Richardson P."/>
        </authorList>
    </citation>
    <scope>NUCLEOTIDE SEQUENCE [LARGE SCALE GENOMIC DNA]</scope>
    <source>
        <strain>CC9902</strain>
    </source>
</reference>
<evidence type="ECO:0000255" key="1">
    <source>
        <dbReference type="HAMAP-Rule" id="MF_00176"/>
    </source>
</evidence>
<protein>
    <recommendedName>
        <fullName evidence="1">Serine--tRNA ligase</fullName>
        <ecNumber evidence="1">6.1.1.11</ecNumber>
    </recommendedName>
    <alternativeName>
        <fullName evidence="1">Seryl-tRNA synthetase</fullName>
        <shortName evidence="1">SerRS</shortName>
    </alternativeName>
    <alternativeName>
        <fullName evidence="1">Seryl-tRNA(Ser/Sec) synthetase</fullName>
    </alternativeName>
</protein>
<keyword id="KW-0030">Aminoacyl-tRNA synthetase</keyword>
<keyword id="KW-0067">ATP-binding</keyword>
<keyword id="KW-0963">Cytoplasm</keyword>
<keyword id="KW-0436">Ligase</keyword>
<keyword id="KW-0547">Nucleotide-binding</keyword>
<keyword id="KW-0648">Protein biosynthesis</keyword>
<keyword id="KW-1185">Reference proteome</keyword>
<accession>Q3AV47</accession>
<comment type="function">
    <text evidence="1">Catalyzes the attachment of serine to tRNA(Ser). Is also able to aminoacylate tRNA(Sec) with serine, to form the misacylated tRNA L-seryl-tRNA(Sec), which will be further converted into selenocysteinyl-tRNA(Sec).</text>
</comment>
<comment type="catalytic activity">
    <reaction evidence="1">
        <text>tRNA(Ser) + L-serine + ATP = L-seryl-tRNA(Ser) + AMP + diphosphate + H(+)</text>
        <dbReference type="Rhea" id="RHEA:12292"/>
        <dbReference type="Rhea" id="RHEA-COMP:9669"/>
        <dbReference type="Rhea" id="RHEA-COMP:9703"/>
        <dbReference type="ChEBI" id="CHEBI:15378"/>
        <dbReference type="ChEBI" id="CHEBI:30616"/>
        <dbReference type="ChEBI" id="CHEBI:33019"/>
        <dbReference type="ChEBI" id="CHEBI:33384"/>
        <dbReference type="ChEBI" id="CHEBI:78442"/>
        <dbReference type="ChEBI" id="CHEBI:78533"/>
        <dbReference type="ChEBI" id="CHEBI:456215"/>
        <dbReference type="EC" id="6.1.1.11"/>
    </reaction>
</comment>
<comment type="catalytic activity">
    <reaction evidence="1">
        <text>tRNA(Sec) + L-serine + ATP = L-seryl-tRNA(Sec) + AMP + diphosphate + H(+)</text>
        <dbReference type="Rhea" id="RHEA:42580"/>
        <dbReference type="Rhea" id="RHEA-COMP:9742"/>
        <dbReference type="Rhea" id="RHEA-COMP:10128"/>
        <dbReference type="ChEBI" id="CHEBI:15378"/>
        <dbReference type="ChEBI" id="CHEBI:30616"/>
        <dbReference type="ChEBI" id="CHEBI:33019"/>
        <dbReference type="ChEBI" id="CHEBI:33384"/>
        <dbReference type="ChEBI" id="CHEBI:78442"/>
        <dbReference type="ChEBI" id="CHEBI:78533"/>
        <dbReference type="ChEBI" id="CHEBI:456215"/>
        <dbReference type="EC" id="6.1.1.11"/>
    </reaction>
</comment>
<comment type="pathway">
    <text evidence="1">Aminoacyl-tRNA biosynthesis; selenocysteinyl-tRNA(Sec) biosynthesis; L-seryl-tRNA(Sec) from L-serine and tRNA(Sec): step 1/1.</text>
</comment>
<comment type="subunit">
    <text evidence="1">Homodimer. The tRNA molecule binds across the dimer.</text>
</comment>
<comment type="subcellular location">
    <subcellularLocation>
        <location evidence="1">Cytoplasm</location>
    </subcellularLocation>
</comment>
<comment type="domain">
    <text evidence="1">Consists of two distinct domains, a catalytic core and a N-terminal extension that is involved in tRNA binding.</text>
</comment>
<comment type="similarity">
    <text evidence="1">Belongs to the class-II aminoacyl-tRNA synthetase family. Type-1 seryl-tRNA synthetase subfamily.</text>
</comment>
<name>SYS_SYNS9</name>
<feature type="chain" id="PRO_1000019852" description="Serine--tRNA ligase">
    <location>
        <begin position="1"/>
        <end position="425"/>
    </location>
</feature>
<feature type="binding site" evidence="1">
    <location>
        <begin position="233"/>
        <end position="235"/>
    </location>
    <ligand>
        <name>L-serine</name>
        <dbReference type="ChEBI" id="CHEBI:33384"/>
    </ligand>
</feature>
<feature type="binding site" evidence="1">
    <location>
        <begin position="264"/>
        <end position="266"/>
    </location>
    <ligand>
        <name>ATP</name>
        <dbReference type="ChEBI" id="CHEBI:30616"/>
    </ligand>
</feature>
<feature type="binding site" evidence="1">
    <location>
        <position position="287"/>
    </location>
    <ligand>
        <name>L-serine</name>
        <dbReference type="ChEBI" id="CHEBI:33384"/>
    </ligand>
</feature>
<feature type="binding site" evidence="1">
    <location>
        <begin position="351"/>
        <end position="354"/>
    </location>
    <ligand>
        <name>ATP</name>
        <dbReference type="ChEBI" id="CHEBI:30616"/>
    </ligand>
</feature>
<feature type="binding site" evidence="1">
    <location>
        <position position="385"/>
    </location>
    <ligand>
        <name>L-serine</name>
        <dbReference type="ChEBI" id="CHEBI:33384"/>
    </ligand>
</feature>
<dbReference type="EC" id="6.1.1.11" evidence="1"/>
<dbReference type="EMBL" id="CP000097">
    <property type="protein sequence ID" value="ABB26748.1"/>
    <property type="molecule type" value="Genomic_DNA"/>
</dbReference>
<dbReference type="RefSeq" id="WP_011360554.1">
    <property type="nucleotide sequence ID" value="NC_007513.1"/>
</dbReference>
<dbReference type="SMR" id="Q3AV47"/>
<dbReference type="STRING" id="316279.Syncc9902_1791"/>
<dbReference type="KEGG" id="sye:Syncc9902_1791"/>
<dbReference type="eggNOG" id="COG0172">
    <property type="taxonomic scope" value="Bacteria"/>
</dbReference>
<dbReference type="HOGENOM" id="CLU_023797_1_1_3"/>
<dbReference type="OrthoDB" id="9804647at2"/>
<dbReference type="UniPathway" id="UPA00906">
    <property type="reaction ID" value="UER00895"/>
</dbReference>
<dbReference type="Proteomes" id="UP000002712">
    <property type="component" value="Chromosome"/>
</dbReference>
<dbReference type="GO" id="GO:0005737">
    <property type="term" value="C:cytoplasm"/>
    <property type="evidence" value="ECO:0007669"/>
    <property type="project" value="UniProtKB-SubCell"/>
</dbReference>
<dbReference type="GO" id="GO:0005524">
    <property type="term" value="F:ATP binding"/>
    <property type="evidence" value="ECO:0007669"/>
    <property type="project" value="UniProtKB-UniRule"/>
</dbReference>
<dbReference type="GO" id="GO:0004828">
    <property type="term" value="F:serine-tRNA ligase activity"/>
    <property type="evidence" value="ECO:0007669"/>
    <property type="project" value="UniProtKB-UniRule"/>
</dbReference>
<dbReference type="GO" id="GO:0016260">
    <property type="term" value="P:selenocysteine biosynthetic process"/>
    <property type="evidence" value="ECO:0007669"/>
    <property type="project" value="UniProtKB-UniRule"/>
</dbReference>
<dbReference type="GO" id="GO:0006434">
    <property type="term" value="P:seryl-tRNA aminoacylation"/>
    <property type="evidence" value="ECO:0007669"/>
    <property type="project" value="UniProtKB-UniRule"/>
</dbReference>
<dbReference type="CDD" id="cd00770">
    <property type="entry name" value="SerRS_core"/>
    <property type="match status" value="1"/>
</dbReference>
<dbReference type="Gene3D" id="3.30.930.10">
    <property type="entry name" value="Bira Bifunctional Protein, Domain 2"/>
    <property type="match status" value="1"/>
</dbReference>
<dbReference type="Gene3D" id="1.10.287.40">
    <property type="entry name" value="Serine-tRNA synthetase, tRNA binding domain"/>
    <property type="match status" value="1"/>
</dbReference>
<dbReference type="HAMAP" id="MF_00176">
    <property type="entry name" value="Ser_tRNA_synth_type1"/>
    <property type="match status" value="1"/>
</dbReference>
<dbReference type="InterPro" id="IPR002314">
    <property type="entry name" value="aa-tRNA-synt_IIb"/>
</dbReference>
<dbReference type="InterPro" id="IPR006195">
    <property type="entry name" value="aa-tRNA-synth_II"/>
</dbReference>
<dbReference type="InterPro" id="IPR045864">
    <property type="entry name" value="aa-tRNA-synth_II/BPL/LPL"/>
</dbReference>
<dbReference type="InterPro" id="IPR002317">
    <property type="entry name" value="Ser-tRNA-ligase_type_1"/>
</dbReference>
<dbReference type="InterPro" id="IPR015866">
    <property type="entry name" value="Ser-tRNA-synth_1_N"/>
</dbReference>
<dbReference type="InterPro" id="IPR042103">
    <property type="entry name" value="SerRS_1_N_sf"/>
</dbReference>
<dbReference type="InterPro" id="IPR033729">
    <property type="entry name" value="SerRS_core"/>
</dbReference>
<dbReference type="InterPro" id="IPR010978">
    <property type="entry name" value="tRNA-bd_arm"/>
</dbReference>
<dbReference type="NCBIfam" id="TIGR00414">
    <property type="entry name" value="serS"/>
    <property type="match status" value="1"/>
</dbReference>
<dbReference type="PANTHER" id="PTHR43697:SF1">
    <property type="entry name" value="SERINE--TRNA LIGASE"/>
    <property type="match status" value="1"/>
</dbReference>
<dbReference type="PANTHER" id="PTHR43697">
    <property type="entry name" value="SERYL-TRNA SYNTHETASE"/>
    <property type="match status" value="1"/>
</dbReference>
<dbReference type="Pfam" id="PF02403">
    <property type="entry name" value="Seryl_tRNA_N"/>
    <property type="match status" value="1"/>
</dbReference>
<dbReference type="Pfam" id="PF00587">
    <property type="entry name" value="tRNA-synt_2b"/>
    <property type="match status" value="1"/>
</dbReference>
<dbReference type="PIRSF" id="PIRSF001529">
    <property type="entry name" value="Ser-tRNA-synth_IIa"/>
    <property type="match status" value="1"/>
</dbReference>
<dbReference type="PRINTS" id="PR00981">
    <property type="entry name" value="TRNASYNTHSER"/>
</dbReference>
<dbReference type="SUPFAM" id="SSF55681">
    <property type="entry name" value="Class II aaRS and biotin synthetases"/>
    <property type="match status" value="1"/>
</dbReference>
<dbReference type="SUPFAM" id="SSF46589">
    <property type="entry name" value="tRNA-binding arm"/>
    <property type="match status" value="1"/>
</dbReference>
<dbReference type="PROSITE" id="PS50862">
    <property type="entry name" value="AA_TRNA_LIGASE_II"/>
    <property type="match status" value="1"/>
</dbReference>
<sequence length="425" mass="47476">MIDQRLVRDNPEVIAQQLKRRGKSIDLTGLQLIARQQRGLEEERSTLQADGNRVGKEVGLKIKGGADPNGEEVAALRQQGNAIKQKVAVFEEEEKALSSQLRDQLLSLPNLPSPLCPDGKSEDDNVEVRRWGTPRIEEGLEEHWQIAQRLNLFDTERSVRIAQSRFVTLMGQGARLERALINFMLDLHTSKGYREVMPPVLVNTASLTGSGQLPKFAEESFRCADDDLWLTPTAEVPVTSLHRDEIIPADQLPLRYSAYSPCFRREAGSYGRDTRGLIRLHQFNKVELYWFVHPDQSEEAHQQITADAEAVLQALDLPYRVLDLCTGDLGFSAQRTYDLEVWLPGAGAFREISSCSVCGDFQARRSAIRTKDGKQTKLVHTLNGSGLAVGRTMAALLETGQQPDGSILLPKPLVPYVGFERLQPE</sequence>
<organism>
    <name type="scientific">Synechococcus sp. (strain CC9902)</name>
    <dbReference type="NCBI Taxonomy" id="316279"/>
    <lineage>
        <taxon>Bacteria</taxon>
        <taxon>Bacillati</taxon>
        <taxon>Cyanobacteriota</taxon>
        <taxon>Cyanophyceae</taxon>
        <taxon>Synechococcales</taxon>
        <taxon>Synechococcaceae</taxon>
        <taxon>Synechococcus</taxon>
    </lineage>
</organism>